<name>Y366_HAEIN</name>
<evidence type="ECO:0000255" key="1">
    <source>
        <dbReference type="PROSITE-ProRule" id="PRU00303"/>
    </source>
</evidence>
<protein>
    <recommendedName>
        <fullName>Uncharacterized protein HI_0366</fullName>
    </recommendedName>
</protein>
<reference key="1">
    <citation type="journal article" date="1995" name="Science">
        <title>Whole-genome random sequencing and assembly of Haemophilus influenzae Rd.</title>
        <authorList>
            <person name="Fleischmann R.D."/>
            <person name="Adams M.D."/>
            <person name="White O."/>
            <person name="Clayton R.A."/>
            <person name="Kirkness E.F."/>
            <person name="Kerlavage A.R."/>
            <person name="Bult C.J."/>
            <person name="Tomb J.-F."/>
            <person name="Dougherty B.A."/>
            <person name="Merrick J.M."/>
            <person name="McKenney K."/>
            <person name="Sutton G.G."/>
            <person name="FitzHugh W."/>
            <person name="Fields C.A."/>
            <person name="Gocayne J.D."/>
            <person name="Scott J.D."/>
            <person name="Shirley R."/>
            <person name="Liu L.-I."/>
            <person name="Glodek A."/>
            <person name="Kelley J.M."/>
            <person name="Weidman J.F."/>
            <person name="Phillips C.A."/>
            <person name="Spriggs T."/>
            <person name="Hedblom E."/>
            <person name="Cotton M.D."/>
            <person name="Utterback T.R."/>
            <person name="Hanna M.C."/>
            <person name="Nguyen D.T."/>
            <person name="Saudek D.M."/>
            <person name="Brandon R.C."/>
            <person name="Fine L.D."/>
            <person name="Fritchman J.L."/>
            <person name="Fuhrmann J.L."/>
            <person name="Geoghagen N.S.M."/>
            <person name="Gnehm C.L."/>
            <person name="McDonald L.A."/>
            <person name="Small K.V."/>
            <person name="Fraser C.M."/>
            <person name="Smith H.O."/>
            <person name="Venter J.C."/>
        </authorList>
    </citation>
    <scope>NUCLEOTIDE SEQUENCE [LARGE SCALE GENOMIC DNA]</scope>
    <source>
        <strain>ATCC 51907 / DSM 11121 / KW20 / Rd</strain>
    </source>
</reference>
<sequence length="179" mass="20598">MKTISKQLSAVIFPFIFSACVSQSASSLNHQTAAKARVELALSYLQQNNPQLAKINLDKALQHDKNYYLVHSALAHYYQQQGQIENAFREYEIAVNLNHKQGDVHNNFGTFLCSQKKFEQAQQQFELALNSPNYYHQADTFENIVLCAYSAQKMDIYQQTLEKLRQIDGKRAEKFNSLK</sequence>
<feature type="signal peptide" description="Or 24" evidence="1">
    <location>
        <begin position="1"/>
        <end position="27"/>
    </location>
</feature>
<feature type="chain" id="PRO_0000013957" description="Uncharacterized protein HI_0366">
    <location>
        <begin position="28"/>
        <end position="179"/>
    </location>
</feature>
<keyword id="KW-1185">Reference proteome</keyword>
<keyword id="KW-0732">Signal</keyword>
<organism>
    <name type="scientific">Haemophilus influenzae (strain ATCC 51907 / DSM 11121 / KW20 / Rd)</name>
    <dbReference type="NCBI Taxonomy" id="71421"/>
    <lineage>
        <taxon>Bacteria</taxon>
        <taxon>Pseudomonadati</taxon>
        <taxon>Pseudomonadota</taxon>
        <taxon>Gammaproteobacteria</taxon>
        <taxon>Pasteurellales</taxon>
        <taxon>Pasteurellaceae</taxon>
        <taxon>Haemophilus</taxon>
    </lineage>
</organism>
<accession>P43988</accession>
<gene>
    <name type="ordered locus">HI_0366</name>
</gene>
<dbReference type="EMBL" id="L42023">
    <property type="protein sequence ID" value="AAC22024.1"/>
    <property type="molecule type" value="Genomic_DNA"/>
</dbReference>
<dbReference type="PIR" id="F64006">
    <property type="entry name" value="F64006"/>
</dbReference>
<dbReference type="RefSeq" id="NP_438527.1">
    <property type="nucleotide sequence ID" value="NC_000907.1"/>
</dbReference>
<dbReference type="SMR" id="P43988"/>
<dbReference type="STRING" id="71421.HI_0366"/>
<dbReference type="EnsemblBacteria" id="AAC22024">
    <property type="protein sequence ID" value="AAC22024"/>
    <property type="gene ID" value="HI_0366"/>
</dbReference>
<dbReference type="KEGG" id="hin:HI_0366"/>
<dbReference type="PATRIC" id="fig|71421.8.peg.384"/>
<dbReference type="eggNOG" id="COG3063">
    <property type="taxonomic scope" value="Bacteria"/>
</dbReference>
<dbReference type="HOGENOM" id="CLU_003728_7_3_6"/>
<dbReference type="OrthoDB" id="9814042at2"/>
<dbReference type="PhylomeDB" id="P43988"/>
<dbReference type="BioCyc" id="HINF71421:G1GJ1-379-MONOMER"/>
<dbReference type="Proteomes" id="UP000000579">
    <property type="component" value="Chromosome"/>
</dbReference>
<dbReference type="Gene3D" id="1.25.40.10">
    <property type="entry name" value="Tetratricopeptide repeat domain"/>
    <property type="match status" value="1"/>
</dbReference>
<dbReference type="InterPro" id="IPR013360">
    <property type="entry name" value="Pilus_4_PilW"/>
</dbReference>
<dbReference type="InterPro" id="IPR011990">
    <property type="entry name" value="TPR-like_helical_dom_sf"/>
</dbReference>
<dbReference type="InterPro" id="IPR019734">
    <property type="entry name" value="TPR_rpt"/>
</dbReference>
<dbReference type="NCBIfam" id="TIGR02521">
    <property type="entry name" value="type_IV_pilW"/>
    <property type="match status" value="1"/>
</dbReference>
<dbReference type="Pfam" id="PF13181">
    <property type="entry name" value="TPR_8"/>
    <property type="match status" value="1"/>
</dbReference>
<dbReference type="SMART" id="SM00028">
    <property type="entry name" value="TPR"/>
    <property type="match status" value="3"/>
</dbReference>
<dbReference type="SUPFAM" id="SSF48452">
    <property type="entry name" value="TPR-like"/>
    <property type="match status" value="1"/>
</dbReference>
<dbReference type="PROSITE" id="PS51257">
    <property type="entry name" value="PROKAR_LIPOPROTEIN"/>
    <property type="match status" value="1"/>
</dbReference>
<dbReference type="PROSITE" id="PS50293">
    <property type="entry name" value="TPR_REGION"/>
    <property type="match status" value="1"/>
</dbReference>
<proteinExistence type="inferred from homology"/>